<reference key="1">
    <citation type="journal article" date="1999" name="J. Biol. Chem.">
        <title>In vivo characterization of a thioredoxin H target protein defines a new peroxiredoxin family.</title>
        <authorList>
            <person name="Verdoucq L."/>
            <person name="Vignols F."/>
            <person name="Jacquot J.-P."/>
            <person name="Chartier Y."/>
            <person name="Meyer Y."/>
        </authorList>
    </citation>
    <scope>NUCLEOTIDE SEQUENCE [MRNA]</scope>
</reference>
<reference key="2">
    <citation type="journal article" date="2000" name="Nature">
        <title>Sequence and analysis of chromosome 1 of the plant Arabidopsis thaliana.</title>
        <authorList>
            <person name="Theologis A."/>
            <person name="Ecker J.R."/>
            <person name="Palm C.J."/>
            <person name="Federspiel N.A."/>
            <person name="Kaul S."/>
            <person name="White O."/>
            <person name="Alonso J."/>
            <person name="Altafi H."/>
            <person name="Araujo R."/>
            <person name="Bowman C.L."/>
            <person name="Brooks S.Y."/>
            <person name="Buehler E."/>
            <person name="Chan A."/>
            <person name="Chao Q."/>
            <person name="Chen H."/>
            <person name="Cheuk R.F."/>
            <person name="Chin C.W."/>
            <person name="Chung M.K."/>
            <person name="Conn L."/>
            <person name="Conway A.B."/>
            <person name="Conway A.R."/>
            <person name="Creasy T.H."/>
            <person name="Dewar K."/>
            <person name="Dunn P."/>
            <person name="Etgu P."/>
            <person name="Feldblyum T.V."/>
            <person name="Feng J.-D."/>
            <person name="Fong B."/>
            <person name="Fujii C.Y."/>
            <person name="Gill J.E."/>
            <person name="Goldsmith A.D."/>
            <person name="Haas B."/>
            <person name="Hansen N.F."/>
            <person name="Hughes B."/>
            <person name="Huizar L."/>
            <person name="Hunter J.L."/>
            <person name="Jenkins J."/>
            <person name="Johnson-Hopson C."/>
            <person name="Khan S."/>
            <person name="Khaykin E."/>
            <person name="Kim C.J."/>
            <person name="Koo H.L."/>
            <person name="Kremenetskaia I."/>
            <person name="Kurtz D.B."/>
            <person name="Kwan A."/>
            <person name="Lam B."/>
            <person name="Langin-Hooper S."/>
            <person name="Lee A."/>
            <person name="Lee J.M."/>
            <person name="Lenz C.A."/>
            <person name="Li J.H."/>
            <person name="Li Y.-P."/>
            <person name="Lin X."/>
            <person name="Liu S.X."/>
            <person name="Liu Z.A."/>
            <person name="Luros J.S."/>
            <person name="Maiti R."/>
            <person name="Marziali A."/>
            <person name="Militscher J."/>
            <person name="Miranda M."/>
            <person name="Nguyen M."/>
            <person name="Nierman W.C."/>
            <person name="Osborne B.I."/>
            <person name="Pai G."/>
            <person name="Peterson J."/>
            <person name="Pham P.K."/>
            <person name="Rizzo M."/>
            <person name="Rooney T."/>
            <person name="Rowley D."/>
            <person name="Sakano H."/>
            <person name="Salzberg S.L."/>
            <person name="Schwartz J.R."/>
            <person name="Shinn P."/>
            <person name="Southwick A.M."/>
            <person name="Sun H."/>
            <person name="Tallon L.J."/>
            <person name="Tambunga G."/>
            <person name="Toriumi M.J."/>
            <person name="Town C.D."/>
            <person name="Utterback T."/>
            <person name="Van Aken S."/>
            <person name="Vaysberg M."/>
            <person name="Vysotskaia V.S."/>
            <person name="Walker M."/>
            <person name="Wu D."/>
            <person name="Yu G."/>
            <person name="Fraser C.M."/>
            <person name="Venter J.C."/>
            <person name="Davis R.W."/>
        </authorList>
    </citation>
    <scope>NUCLEOTIDE SEQUENCE [LARGE SCALE GENOMIC DNA]</scope>
    <source>
        <strain>cv. Columbia</strain>
    </source>
</reference>
<reference key="3">
    <citation type="journal article" date="2017" name="Plant J.">
        <title>Araport11: a complete reannotation of the Arabidopsis thaliana reference genome.</title>
        <authorList>
            <person name="Cheng C.Y."/>
            <person name="Krishnakumar V."/>
            <person name="Chan A.P."/>
            <person name="Thibaud-Nissen F."/>
            <person name="Schobel S."/>
            <person name="Town C.D."/>
        </authorList>
    </citation>
    <scope>GENOME REANNOTATION</scope>
    <source>
        <strain>cv. Columbia</strain>
    </source>
</reference>
<reference key="4">
    <citation type="journal article" date="2003" name="Science">
        <title>Empirical analysis of transcriptional activity in the Arabidopsis genome.</title>
        <authorList>
            <person name="Yamada K."/>
            <person name="Lim J."/>
            <person name="Dale J.M."/>
            <person name="Chen H."/>
            <person name="Shinn P."/>
            <person name="Palm C.J."/>
            <person name="Southwick A.M."/>
            <person name="Wu H.C."/>
            <person name="Kim C.J."/>
            <person name="Nguyen M."/>
            <person name="Pham P.K."/>
            <person name="Cheuk R.F."/>
            <person name="Karlin-Newmann G."/>
            <person name="Liu S.X."/>
            <person name="Lam B."/>
            <person name="Sakano H."/>
            <person name="Wu T."/>
            <person name="Yu G."/>
            <person name="Miranda M."/>
            <person name="Quach H.L."/>
            <person name="Tripp M."/>
            <person name="Chang C.H."/>
            <person name="Lee J.M."/>
            <person name="Toriumi M.J."/>
            <person name="Chan M.M."/>
            <person name="Tang C.C."/>
            <person name="Onodera C.S."/>
            <person name="Deng J.M."/>
            <person name="Akiyama K."/>
            <person name="Ansari Y."/>
            <person name="Arakawa T."/>
            <person name="Banh J."/>
            <person name="Banno F."/>
            <person name="Bowser L."/>
            <person name="Brooks S.Y."/>
            <person name="Carninci P."/>
            <person name="Chao Q."/>
            <person name="Choy N."/>
            <person name="Enju A."/>
            <person name="Goldsmith A.D."/>
            <person name="Gurjal M."/>
            <person name="Hansen N.F."/>
            <person name="Hayashizaki Y."/>
            <person name="Johnson-Hopson C."/>
            <person name="Hsuan V.W."/>
            <person name="Iida K."/>
            <person name="Karnes M."/>
            <person name="Khan S."/>
            <person name="Koesema E."/>
            <person name="Ishida J."/>
            <person name="Jiang P.X."/>
            <person name="Jones T."/>
            <person name="Kawai J."/>
            <person name="Kamiya A."/>
            <person name="Meyers C."/>
            <person name="Nakajima M."/>
            <person name="Narusaka M."/>
            <person name="Seki M."/>
            <person name="Sakurai T."/>
            <person name="Satou M."/>
            <person name="Tamse R."/>
            <person name="Vaysberg M."/>
            <person name="Wallender E.K."/>
            <person name="Wong C."/>
            <person name="Yamamura Y."/>
            <person name="Yuan S."/>
            <person name="Shinozaki K."/>
            <person name="Davis R.W."/>
            <person name="Theologis A."/>
            <person name="Ecker J.R."/>
        </authorList>
    </citation>
    <scope>NUCLEOTIDE SEQUENCE [LARGE SCALE MRNA]</scope>
    <source>
        <strain>cv. Columbia</strain>
    </source>
</reference>
<reference key="5">
    <citation type="submission" date="2002-03" db="EMBL/GenBank/DDBJ databases">
        <title>Full-length cDNA from Arabidopsis thaliana.</title>
        <authorList>
            <person name="Brover V.V."/>
            <person name="Troukhan M.E."/>
            <person name="Alexandrov N.A."/>
            <person name="Lu Y.-P."/>
            <person name="Flavell R.B."/>
            <person name="Feldmann K.A."/>
        </authorList>
    </citation>
    <scope>NUCLEOTIDE SEQUENCE [LARGE SCALE MRNA]</scope>
</reference>
<reference key="6">
    <citation type="submission" date="2006-07" db="EMBL/GenBank/DDBJ databases">
        <title>Large-scale analysis of RIKEN Arabidopsis full-length (RAFL) cDNAs.</title>
        <authorList>
            <person name="Totoki Y."/>
            <person name="Seki M."/>
            <person name="Ishida J."/>
            <person name="Nakajima M."/>
            <person name="Enju A."/>
            <person name="Kamiya A."/>
            <person name="Narusaka M."/>
            <person name="Shin-i T."/>
            <person name="Nakagawa M."/>
            <person name="Sakamoto N."/>
            <person name="Oishi K."/>
            <person name="Kohara Y."/>
            <person name="Kobayashi M."/>
            <person name="Toyoda A."/>
            <person name="Sakaki Y."/>
            <person name="Sakurai T."/>
            <person name="Iida K."/>
            <person name="Akiyama K."/>
            <person name="Satou M."/>
            <person name="Toyoda T."/>
            <person name="Konagaya A."/>
            <person name="Carninci P."/>
            <person name="Kawai J."/>
            <person name="Hayashizaki Y."/>
            <person name="Shinozaki K."/>
        </authorList>
    </citation>
    <scope>NUCLEOTIDE SEQUENCE [LARGE SCALE MRNA]</scope>
    <source>
        <strain>cv. Columbia</strain>
    </source>
</reference>
<reference key="7">
    <citation type="journal article" date="2002" name="Plant Physiol. Biochem.">
        <title>Type II peroxiredoxin C, a member of the peroxiredoxin family of Arabidopsis thaliana: its expression and activity in comparison with other peroxiredoxins.</title>
        <authorList>
            <person name="Horling F."/>
            <person name="Koenig J."/>
            <person name="Dietz K.-J."/>
        </authorList>
    </citation>
    <scope>CATALYTIC ACTIVITY</scope>
    <scope>SUBUNIT</scope>
    <scope>BIOPHYSICOCHEMICAL PROPERTIES</scope>
    <scope>TISSUE SPECIFICITY</scope>
    <scope>INDUCTION</scope>
</reference>
<reference key="8">
    <citation type="journal article" date="2003" name="Plant Physiol.">
        <title>Divergent light-, ascorbate-, and oxidative stress-dependent regulation of expression of the peroxiredoxin gene family in Arabidopsis.</title>
        <authorList>
            <person name="Horling F."/>
            <person name="Lamkemeyer P."/>
            <person name="Koenig J."/>
            <person name="Finkemeier I."/>
            <person name="Kandlbinder A."/>
            <person name="Baier M."/>
            <person name="Dietz K.-J."/>
        </authorList>
    </citation>
    <scope>INDUCTION</scope>
</reference>
<reference key="9">
    <citation type="journal article" date="2003" name="Plant Physiol.">
        <title>Resemblance and dissemblance of Arabidopsis type II peroxiredoxins: similar sequences for divergent gene expression, protein localization, and activity.</title>
        <authorList>
            <person name="Brehelin C."/>
            <person name="Meyer E.H."/>
            <person name="de Souris J.-P."/>
            <person name="Bonnard G."/>
            <person name="Meyer Y."/>
        </authorList>
    </citation>
    <scope>TISSUE SPECIFICITY</scope>
</reference>
<reference key="10">
    <citation type="journal article" date="2005" name="Free Radic. Biol. Med.">
        <title>The plant multigenic family of thiol peroxidases.</title>
        <authorList>
            <person name="Rouhier N."/>
            <person name="Jacquot J.-P."/>
        </authorList>
    </citation>
    <scope>GENE FAMILY ORGANIZATION</scope>
    <scope>NOMENCLATURE</scope>
</reference>
<comment type="function">
    <text evidence="8">Thiol-specific peroxidase that catalyzes the reduction of hydrogen peroxide and organic hydroperoxides to water and alcohols, respectively. Plays a role in cell protection against oxidative stress by detoxifying peroxides and as sensor of hydrogen peroxide-mediated signaling events.</text>
</comment>
<comment type="catalytic activity">
    <reaction evidence="6">
        <text>[glutaredoxin]-dithiol + a hydroperoxide = [glutaredoxin]-disulfide + an alcohol + H2O</text>
        <dbReference type="Rhea" id="RHEA:62624"/>
        <dbReference type="Rhea" id="RHEA-COMP:10729"/>
        <dbReference type="Rhea" id="RHEA-COMP:10730"/>
        <dbReference type="ChEBI" id="CHEBI:15377"/>
        <dbReference type="ChEBI" id="CHEBI:29950"/>
        <dbReference type="ChEBI" id="CHEBI:30879"/>
        <dbReference type="ChEBI" id="CHEBI:35924"/>
        <dbReference type="ChEBI" id="CHEBI:50058"/>
        <dbReference type="EC" id="1.11.1.25"/>
    </reaction>
</comment>
<comment type="biophysicochemical properties">
    <kinetics>
        <Vmax evidence="6">8.9 nmol/min/mg enzyme for H(2)O(2)</Vmax>
    </kinetics>
</comment>
<comment type="subunit">
    <text evidence="6">Monomer.</text>
</comment>
<comment type="subcellular location">
    <subcellularLocation>
        <location evidence="1">Cytoplasm</location>
    </subcellularLocation>
</comment>
<comment type="tissue specificity">
    <text evidence="5 6">Highly expressed in buds and flowers. Slightly expressed in green tissues. Also detected in pollen.</text>
</comment>
<comment type="induction">
    <text evidence="4 6">Highly induced by salt or oxidative stresses.</text>
</comment>
<comment type="miscellaneous">
    <text evidence="2">The active site is a conserved redox-active cysteine residue, the peroxidatic cysteine (C(P)), which makes the nucleophilic attack on the peroxide substrate. The peroxide oxidizes the C(P)-SH to cysteine sulfenic acid (C(P)-SOH), which then reacts with another cysteine residue, the resolving cysteine (C(R)), to form a disulfide bridge. The disulfide is subsequently reduced by an appropriate electron donor to complete the catalytic cycle. In this 1-Cys peroxiredoxin, no C(R) is present and C(P) instead forms a disulfide with a cysteine from another protein or with a small thiol molecule.</text>
</comment>
<comment type="similarity">
    <text evidence="7">Belongs to the peroxiredoxin family. Prx5 subfamily.</text>
</comment>
<keyword id="KW-0049">Antioxidant</keyword>
<keyword id="KW-0963">Cytoplasm</keyword>
<keyword id="KW-0560">Oxidoreductase</keyword>
<keyword id="KW-0575">Peroxidase</keyword>
<keyword id="KW-0676">Redox-active center</keyword>
<keyword id="KW-1185">Reference proteome</keyword>
<evidence type="ECO:0000250" key="1"/>
<evidence type="ECO:0000250" key="2">
    <source>
        <dbReference type="UniProtKB" id="A9PCL4"/>
    </source>
</evidence>
<evidence type="ECO:0000255" key="3">
    <source>
        <dbReference type="PROSITE-ProRule" id="PRU00691"/>
    </source>
</evidence>
<evidence type="ECO:0000269" key="4">
    <source>
    </source>
</evidence>
<evidence type="ECO:0000269" key="5">
    <source>
    </source>
</evidence>
<evidence type="ECO:0000269" key="6">
    <source ref="7"/>
</evidence>
<evidence type="ECO:0000305" key="7"/>
<evidence type="ECO:0000305" key="8">
    <source>
    </source>
</evidence>
<name>PRX2C_ARATH</name>
<proteinExistence type="evidence at protein level"/>
<organism>
    <name type="scientific">Arabidopsis thaliana</name>
    <name type="common">Mouse-ear cress</name>
    <dbReference type="NCBI Taxonomy" id="3702"/>
    <lineage>
        <taxon>Eukaryota</taxon>
        <taxon>Viridiplantae</taxon>
        <taxon>Streptophyta</taxon>
        <taxon>Embryophyta</taxon>
        <taxon>Tracheophyta</taxon>
        <taxon>Spermatophyta</taxon>
        <taxon>Magnoliopsida</taxon>
        <taxon>eudicotyledons</taxon>
        <taxon>Gunneridae</taxon>
        <taxon>Pentapetalae</taxon>
        <taxon>rosids</taxon>
        <taxon>malvids</taxon>
        <taxon>Brassicales</taxon>
        <taxon>Brassicaceae</taxon>
        <taxon>Camelineae</taxon>
        <taxon>Arabidopsis</taxon>
    </lineage>
</organism>
<gene>
    <name type="primary">PRXIIC</name>
    <name type="synonym">TPX2</name>
    <name type="ordered locus">At1g65970</name>
    <name type="ORF">F12P19.13</name>
</gene>
<protein>
    <recommendedName>
        <fullName>Peroxiredoxin-2C</fullName>
        <ecNumber evidence="6">1.11.1.25</ecNumber>
    </recommendedName>
    <alternativeName>
        <fullName evidence="7">Glutaredoxin-dependent peroxiredoxin</fullName>
    </alternativeName>
    <alternativeName>
        <fullName>Peroxiredoxin IIC</fullName>
    </alternativeName>
    <alternativeName>
        <fullName>Peroxiredoxin TPx2</fullName>
    </alternativeName>
    <alternativeName>
        <fullName>Thioredoxin peroxidase 2C</fullName>
    </alternativeName>
    <alternativeName>
        <fullName>Thioredoxin-dependent peroxidase 2</fullName>
    </alternativeName>
</protein>
<feature type="chain" id="PRO_0000282280" description="Peroxiredoxin-2C">
    <location>
        <begin position="1"/>
        <end position="162"/>
    </location>
</feature>
<feature type="domain" description="Thioredoxin" evidence="3">
    <location>
        <begin position="4"/>
        <end position="162"/>
    </location>
</feature>
<feature type="active site" description="Cysteine sulfenic acid (-SOH) intermediate" evidence="2">
    <location>
        <position position="51"/>
    </location>
</feature>
<sequence>MAPITVGDVVPDGTISFFDENDQLQTVSVHSIAAGKKVILFGVPGAFTPTCSMSHVPGFIGKAEELKSKGIDEIICFSVNDPFVMKAWGKTYPENKHVKFVADGSGEYTHLLGLELDLKDKGLGIRSRRFALLLDNLKVTVANVESGGEFTVSSAEDILKAL</sequence>
<dbReference type="EC" id="1.11.1.25" evidence="6"/>
<dbReference type="EMBL" id="AF121356">
    <property type="protein sequence ID" value="AAD28243.1"/>
    <property type="molecule type" value="mRNA"/>
</dbReference>
<dbReference type="EMBL" id="AC009513">
    <property type="protein sequence ID" value="AAF06057.1"/>
    <property type="molecule type" value="Genomic_DNA"/>
</dbReference>
<dbReference type="EMBL" id="CP002684">
    <property type="protein sequence ID" value="AEE34446.1"/>
    <property type="molecule type" value="Genomic_DNA"/>
</dbReference>
<dbReference type="EMBL" id="AF332463">
    <property type="protein sequence ID" value="AAG48826.1"/>
    <property type="molecule type" value="mRNA"/>
</dbReference>
<dbReference type="EMBL" id="BT003050">
    <property type="protein sequence ID" value="AAO23615.1"/>
    <property type="molecule type" value="mRNA"/>
</dbReference>
<dbReference type="EMBL" id="AY084458">
    <property type="protein sequence ID" value="AAM61030.1"/>
    <property type="molecule type" value="mRNA"/>
</dbReference>
<dbReference type="EMBL" id="AK227350">
    <property type="protein sequence ID" value="BAE99360.1"/>
    <property type="molecule type" value="mRNA"/>
</dbReference>
<dbReference type="PIR" id="A96684">
    <property type="entry name" value="A96684"/>
</dbReference>
<dbReference type="RefSeq" id="NP_176772.1">
    <property type="nucleotide sequence ID" value="NM_105269.4"/>
</dbReference>
<dbReference type="SMR" id="Q9SRZ4"/>
<dbReference type="FunCoup" id="Q9SRZ4">
    <property type="interactions" value="1694"/>
</dbReference>
<dbReference type="STRING" id="3702.Q9SRZ4"/>
<dbReference type="PeroxiBase" id="14574">
    <property type="entry name" value="HaPNC20"/>
</dbReference>
<dbReference type="PeroxiBase" id="4347">
    <property type="entry name" value="AtPrxII03"/>
</dbReference>
<dbReference type="PaxDb" id="3702-AT1G65970.1"/>
<dbReference type="ProteomicsDB" id="226339"/>
<dbReference type="EnsemblPlants" id="AT1G65970.1">
    <property type="protein sequence ID" value="AT1G65970.1"/>
    <property type="gene ID" value="AT1G65970"/>
</dbReference>
<dbReference type="GeneID" id="842909"/>
<dbReference type="Gramene" id="AT1G65970.1">
    <property type="protein sequence ID" value="AT1G65970.1"/>
    <property type="gene ID" value="AT1G65970"/>
</dbReference>
<dbReference type="KEGG" id="ath:AT1G65970"/>
<dbReference type="Araport" id="AT1G65970"/>
<dbReference type="TAIR" id="AT1G65970">
    <property type="gene designation" value="TPX2"/>
</dbReference>
<dbReference type="eggNOG" id="KOG0541">
    <property type="taxonomic scope" value="Eukaryota"/>
</dbReference>
<dbReference type="HOGENOM" id="CLU_072440_1_2_1"/>
<dbReference type="InParanoid" id="Q9SRZ4"/>
<dbReference type="OMA" id="ACLLCIK"/>
<dbReference type="PhylomeDB" id="Q9SRZ4"/>
<dbReference type="BioCyc" id="ARA:AT1G65970-MONOMER"/>
<dbReference type="PRO" id="PR:Q9SRZ4"/>
<dbReference type="Proteomes" id="UP000006548">
    <property type="component" value="Chromosome 1"/>
</dbReference>
<dbReference type="ExpressionAtlas" id="Q9SRZ4">
    <property type="expression patterns" value="baseline and differential"/>
</dbReference>
<dbReference type="GO" id="GO:0005737">
    <property type="term" value="C:cytoplasm"/>
    <property type="evidence" value="ECO:0007669"/>
    <property type="project" value="UniProtKB-SubCell"/>
</dbReference>
<dbReference type="GO" id="GO:0008379">
    <property type="term" value="F:thioredoxin peroxidase activity"/>
    <property type="evidence" value="ECO:0000314"/>
    <property type="project" value="TAIR"/>
</dbReference>
<dbReference type="GO" id="GO:0034599">
    <property type="term" value="P:cellular response to oxidative stress"/>
    <property type="evidence" value="ECO:0007669"/>
    <property type="project" value="InterPro"/>
</dbReference>
<dbReference type="CDD" id="cd03013">
    <property type="entry name" value="PRX5_like"/>
    <property type="match status" value="1"/>
</dbReference>
<dbReference type="FunFam" id="3.40.30.10:FF:000020">
    <property type="entry name" value="Peroxiredoxin"/>
    <property type="match status" value="1"/>
</dbReference>
<dbReference type="Gene3D" id="3.40.30.10">
    <property type="entry name" value="Glutaredoxin"/>
    <property type="match status" value="1"/>
</dbReference>
<dbReference type="InterPro" id="IPR037944">
    <property type="entry name" value="PRX5-like"/>
</dbReference>
<dbReference type="InterPro" id="IPR013740">
    <property type="entry name" value="Redoxin"/>
</dbReference>
<dbReference type="InterPro" id="IPR036249">
    <property type="entry name" value="Thioredoxin-like_sf"/>
</dbReference>
<dbReference type="InterPro" id="IPR013766">
    <property type="entry name" value="Thioredoxin_domain"/>
</dbReference>
<dbReference type="PANTHER" id="PTHR10430">
    <property type="entry name" value="PEROXIREDOXIN"/>
    <property type="match status" value="1"/>
</dbReference>
<dbReference type="PANTHER" id="PTHR10430:SF8">
    <property type="entry name" value="PEROXIREDOXIN-2A-RELATED"/>
    <property type="match status" value="1"/>
</dbReference>
<dbReference type="Pfam" id="PF08534">
    <property type="entry name" value="Redoxin"/>
    <property type="match status" value="1"/>
</dbReference>
<dbReference type="SUPFAM" id="SSF52833">
    <property type="entry name" value="Thioredoxin-like"/>
    <property type="match status" value="1"/>
</dbReference>
<dbReference type="PROSITE" id="PS51352">
    <property type="entry name" value="THIOREDOXIN_2"/>
    <property type="match status" value="1"/>
</dbReference>
<accession>Q9SRZ4</accession>